<organismHost>
    <name type="scientific">Homo sapiens</name>
    <name type="common">Human</name>
    <dbReference type="NCBI Taxonomy" id="9606"/>
</organismHost>
<comment type="function">
    <text evidence="1">Plays several roles during the time course of infection, including egress of virus particles from the perinuclear space and secondary envelopment of cytoplasmic capsids that bud into specific trans-Golgi network (TGN)-derived membranes.</text>
</comment>
<comment type="subunit">
    <text evidence="1 2">Homodimer (By similarity). Interacts with BBRF2; the BBRF2-BSRF1 complexes oligomerize which might play a role in tethering the viral nucleocapsids to the host Golgi membrane during secondary envelopment (By similarity). Interacts with BGLF3.5 (By similarity). Interacts with BALF1 (By similarity). Interacts with glycoprotein gB (By similarity). Interacts with glycoprotein heterodimer gH/gL (By similarity).</text>
</comment>
<comment type="subcellular location">
    <subcellularLocation>
        <location evidence="1">Host cytoplasm</location>
    </subcellularLocation>
    <subcellularLocation>
        <location evidence="1">Virion</location>
    </subcellularLocation>
    <subcellularLocation>
        <location evidence="1">Host Golgi apparatus</location>
    </subcellularLocation>
    <text evidence="1">Probably part of the virion tugument.</text>
</comment>
<comment type="PTM">
    <text evidence="2">Phosphorylated.</text>
</comment>
<comment type="PTM">
    <text evidence="2">Palmitoylation is necessary for Golgi localization.</text>
</comment>
<comment type="similarity">
    <text evidence="4">Belongs to the herpesviridae UL51 family.</text>
</comment>
<name>TEG7_EBVG</name>
<proteinExistence type="inferred from homology"/>
<dbReference type="EMBL" id="AY961628">
    <property type="protein sequence ID" value="AAY41112.1"/>
    <property type="molecule type" value="Genomic_DNA"/>
</dbReference>
<dbReference type="RefSeq" id="YP_401663.1">
    <property type="nucleotide sequence ID" value="NC_007605.1"/>
</dbReference>
<dbReference type="SMR" id="P0CK62"/>
<dbReference type="DNASU" id="3783731"/>
<dbReference type="GeneID" id="3783731"/>
<dbReference type="KEGG" id="vg:3783731"/>
<dbReference type="Proteomes" id="UP000007641">
    <property type="component" value="Genome"/>
</dbReference>
<dbReference type="GO" id="GO:0044177">
    <property type="term" value="C:host cell Golgi apparatus"/>
    <property type="evidence" value="ECO:0007669"/>
    <property type="project" value="UniProtKB-SubCell"/>
</dbReference>
<dbReference type="GO" id="GO:0044423">
    <property type="term" value="C:virion component"/>
    <property type="evidence" value="ECO:0007669"/>
    <property type="project" value="UniProtKB-KW"/>
</dbReference>
<dbReference type="InterPro" id="IPR007619">
    <property type="entry name" value="Herpes_U44"/>
</dbReference>
<dbReference type="Pfam" id="PF04533">
    <property type="entry name" value="Herpes_U44"/>
    <property type="match status" value="1"/>
</dbReference>
<protein>
    <recommendedName>
        <fullName>Tegument protein UL51 homolog</fullName>
    </recommendedName>
</protein>
<accession>P0CK62</accession>
<accession>P03194</accession>
<accession>Q777F4</accession>
<keyword id="KW-1035">Host cytoplasm</keyword>
<keyword id="KW-1040">Host Golgi apparatus</keyword>
<keyword id="KW-0449">Lipoprotein</keyword>
<keyword id="KW-0564">Palmitate</keyword>
<keyword id="KW-0597">Phosphoprotein</keyword>
<keyword id="KW-0946">Virion</keyword>
<gene>
    <name type="ORF">BSRF1</name>
</gene>
<reference key="1">
    <citation type="journal article" date="2005" name="J. Virol.">
        <title>Genomic sequence analysis of Epstein-Barr virus strain GD1 from a nasopharyngeal carcinoma patient.</title>
        <authorList>
            <person name="Zeng M.-S."/>
            <person name="Li D.-J."/>
            <person name="Liu Q.-L."/>
            <person name="Song L.-B."/>
            <person name="Li M.-Z."/>
            <person name="Zhang R.-H."/>
            <person name="Yu X.-J."/>
            <person name="Wang H.-M."/>
            <person name="Ernberg I."/>
            <person name="Zeng Y.-X."/>
        </authorList>
    </citation>
    <scope>NUCLEOTIDE SEQUENCE [LARGE SCALE GENOMIC DNA]</scope>
</reference>
<organism>
    <name type="scientific">Epstein-Barr virus (strain GD1)</name>
    <name type="common">HHV-4</name>
    <name type="synonym">Human gammaherpesvirus 4</name>
    <dbReference type="NCBI Taxonomy" id="10376"/>
    <lineage>
        <taxon>Viruses</taxon>
        <taxon>Duplodnaviria</taxon>
        <taxon>Heunggongvirae</taxon>
        <taxon>Peploviricota</taxon>
        <taxon>Herviviricetes</taxon>
        <taxon>Herpesvirales</taxon>
        <taxon>Orthoherpesviridae</taxon>
        <taxon>Gammaherpesvirinae</taxon>
        <taxon>Lymphocryptovirus</taxon>
        <taxon>Lymphocryptovirus humangamma4</taxon>
    </lineage>
</organism>
<sequence length="218" mass="23861">MAFYLPDWSCCGLWLFGRPRNRYSQLPEEPETFECPDRWRAEIDLGLPPGVQVGDLLRNEQTMGSLRQVYLLAVQANSITDHLKRFDAVRVPESCRGVVEAQVAKLEAVRSVIWNTMISLAVSGIEMDENGLKALLDKQAGDSLALMEMEKVATALKMDETGAWAQEISAVVSSVTAPSASAPFINSAFEPEVPTPVLAPPPVVRQPEHSGPTELALT</sequence>
<evidence type="ECO:0000250" key="1">
    <source>
        <dbReference type="UniProtKB" id="P0CK49"/>
    </source>
</evidence>
<evidence type="ECO:0000250" key="2">
    <source>
        <dbReference type="UniProtKB" id="P10235"/>
    </source>
</evidence>
<evidence type="ECO:0000256" key="3">
    <source>
        <dbReference type="SAM" id="MobiDB-lite"/>
    </source>
</evidence>
<evidence type="ECO:0000305" key="4"/>
<feature type="chain" id="PRO_0000415969" description="Tegument protein UL51 homolog">
    <location>
        <begin position="1"/>
        <end position="218"/>
    </location>
</feature>
<feature type="region of interest" description="Disordered" evidence="3">
    <location>
        <begin position="199"/>
        <end position="218"/>
    </location>
</feature>
<feature type="lipid moiety-binding region" description="S-palmitoyl cysteine; by host" evidence="2">
    <location>
        <position position="11"/>
    </location>
</feature>